<dbReference type="EC" id="2.5.1.-" evidence="2"/>
<dbReference type="EC" id="2.5.1.1" evidence="2"/>
<dbReference type="EC" id="2.5.1.29" evidence="2"/>
<dbReference type="EC" id="2.5.1.10" evidence="2"/>
<dbReference type="EMBL" id="LC314149">
    <property type="protein sequence ID" value="BCI98772.1"/>
    <property type="molecule type" value="Genomic_DNA"/>
</dbReference>
<dbReference type="SMR" id="A0A6S6QJ62"/>
<dbReference type="UniPathway" id="UPA00213"/>
<dbReference type="GO" id="GO:0046872">
    <property type="term" value="F:metal ion binding"/>
    <property type="evidence" value="ECO:0007669"/>
    <property type="project" value="UniProtKB-KW"/>
</dbReference>
<dbReference type="GO" id="GO:0004659">
    <property type="term" value="F:prenyltransferase activity"/>
    <property type="evidence" value="ECO:0007669"/>
    <property type="project" value="InterPro"/>
</dbReference>
<dbReference type="GO" id="GO:0017000">
    <property type="term" value="P:antibiotic biosynthetic process"/>
    <property type="evidence" value="ECO:0007669"/>
    <property type="project" value="UniProtKB-KW"/>
</dbReference>
<dbReference type="GO" id="GO:0016114">
    <property type="term" value="P:terpenoid biosynthetic process"/>
    <property type="evidence" value="ECO:0007669"/>
    <property type="project" value="UniProtKB-UniPathway"/>
</dbReference>
<dbReference type="Gene3D" id="1.10.600.10">
    <property type="entry name" value="Farnesyl Diphosphate Synthase"/>
    <property type="match status" value="1"/>
</dbReference>
<dbReference type="InterPro" id="IPR008949">
    <property type="entry name" value="Isoprenoid_synthase_dom_sf"/>
</dbReference>
<dbReference type="InterPro" id="IPR000092">
    <property type="entry name" value="Polyprenyl_synt"/>
</dbReference>
<dbReference type="InterPro" id="IPR033749">
    <property type="entry name" value="Polyprenyl_synt_CS"/>
</dbReference>
<dbReference type="PANTHER" id="PTHR12001">
    <property type="entry name" value="GERANYLGERANYL PYROPHOSPHATE SYNTHASE"/>
    <property type="match status" value="1"/>
</dbReference>
<dbReference type="PANTHER" id="PTHR12001:SF44">
    <property type="entry name" value="GERANYLGERANYL PYROPHOSPHATE SYNTHASE"/>
    <property type="match status" value="1"/>
</dbReference>
<dbReference type="Pfam" id="PF00348">
    <property type="entry name" value="polyprenyl_synt"/>
    <property type="match status" value="1"/>
</dbReference>
<dbReference type="SFLD" id="SFLDS00005">
    <property type="entry name" value="Isoprenoid_Synthase_Type_I"/>
    <property type="match status" value="1"/>
</dbReference>
<dbReference type="SUPFAM" id="SSF48576">
    <property type="entry name" value="Terpenoid synthases"/>
    <property type="match status" value="1"/>
</dbReference>
<dbReference type="PROSITE" id="PS00723">
    <property type="entry name" value="POLYPRENYL_SYNTHASE_1"/>
    <property type="match status" value="1"/>
</dbReference>
<dbReference type="PROSITE" id="PS00444">
    <property type="entry name" value="POLYPRENYL_SYNTHASE_2"/>
    <property type="match status" value="1"/>
</dbReference>
<evidence type="ECO:0000250" key="1">
    <source>
        <dbReference type="UniProtKB" id="A0A2L0VXR0"/>
    </source>
</evidence>
<evidence type="ECO:0000250" key="2">
    <source>
        <dbReference type="UniProtKB" id="Q12051"/>
    </source>
</evidence>
<evidence type="ECO:0000269" key="3">
    <source>
    </source>
</evidence>
<evidence type="ECO:0000303" key="4">
    <source>
    </source>
</evidence>
<evidence type="ECO:0000305" key="5"/>
<proteinExistence type="evidence at protein level"/>
<accession>A0A6S6QJ62</accession>
<keyword id="KW-0045">Antibiotic biosynthesis</keyword>
<keyword id="KW-0414">Isoprene biosynthesis</keyword>
<keyword id="KW-0460">Magnesium</keyword>
<keyword id="KW-0479">Metal-binding</keyword>
<keyword id="KW-0808">Transferase</keyword>
<comment type="function">
    <text evidence="1 3">Geranylgeranyl pyrophosphate synthase; part of the gene cluster that mediates the biosynthesis of pleuromutilin, a tricyclic diterpene showing antibacterial properties (PubMed:28924980). The geranylgeranyl diphosphate (GGPP) synthase ple4 catalyzes the first step in pleuromutilin biosynthesis (PubMed:28924980). GGPP is then substrate of the premutilin synthase (PS) ple3 to yield premutilin (PubMed:28924980). Premutilin synthase is a bifunctional enzyme composed of the fusion of a class II diterpene cyclase (DTC) and a class I diterpene synthase (DTS), with the corresponding domains and active sites containing characteristic aspartate-rich motifs (By similarity). GGPP is first converted to mutildienyl-diphosphate (MPP) at the class II DTC site (By similarity). MPP is subsequently further cyclized at the class I DTS site, followed by a 1,5-hydride shift and addition of water prior to terminating deprotonation, to yield premutilin (By similarity). The cytochrome P450 monooxygenases ple5 and ple6 hydroxylate premutilin at C-11 and C-3, respectively, producing 11-hydroxypremutilin and 3-hydroxypremutilin (PubMed:28924980). The combination of the actions of both ple5 and ple6 leads to the production of 3,11-dihydroxypremutilin (PubMed:28924980). The short chain dehydrogenase ple7 further converts 3,11-dihydroxypremutilin into mutilin (PubMed:28924980). The acetyltransferase ple2 then acetylates mutilin to produce 14-O-acetylmutilin (PubMed:28924980). Finally, the cytochrome P450 monooxygenase ple1 catalyzes hydroxylation on the alpha position of the acetyl side chain of 14-O-acetylmutilin to yield pleuromutilin (PubMed:28924980).</text>
</comment>
<comment type="catalytic activity">
    <reaction evidence="2">
        <text>isopentenyl diphosphate + dimethylallyl diphosphate = (2E)-geranyl diphosphate + diphosphate</text>
        <dbReference type="Rhea" id="RHEA:22408"/>
        <dbReference type="ChEBI" id="CHEBI:33019"/>
        <dbReference type="ChEBI" id="CHEBI:57623"/>
        <dbReference type="ChEBI" id="CHEBI:58057"/>
        <dbReference type="ChEBI" id="CHEBI:128769"/>
        <dbReference type="EC" id="2.5.1.1"/>
    </reaction>
</comment>
<comment type="catalytic activity">
    <reaction evidence="2">
        <text>isopentenyl diphosphate + (2E)-geranyl diphosphate = (2E,6E)-farnesyl diphosphate + diphosphate</text>
        <dbReference type="Rhea" id="RHEA:19361"/>
        <dbReference type="ChEBI" id="CHEBI:33019"/>
        <dbReference type="ChEBI" id="CHEBI:58057"/>
        <dbReference type="ChEBI" id="CHEBI:128769"/>
        <dbReference type="ChEBI" id="CHEBI:175763"/>
        <dbReference type="EC" id="2.5.1.10"/>
    </reaction>
</comment>
<comment type="catalytic activity">
    <reaction evidence="2">
        <text>isopentenyl diphosphate + (2E,6E)-farnesyl diphosphate = (2E,6E,10E)-geranylgeranyl diphosphate + diphosphate</text>
        <dbReference type="Rhea" id="RHEA:17653"/>
        <dbReference type="ChEBI" id="CHEBI:33019"/>
        <dbReference type="ChEBI" id="CHEBI:58756"/>
        <dbReference type="ChEBI" id="CHEBI:128769"/>
        <dbReference type="ChEBI" id="CHEBI:175763"/>
        <dbReference type="EC" id="2.5.1.29"/>
    </reaction>
</comment>
<comment type="cofactor">
    <cofactor evidence="2">
        <name>Mg(2+)</name>
        <dbReference type="ChEBI" id="CHEBI:18420"/>
    </cofactor>
    <text evidence="2">Binds 2 Mg(2+) ions per subunit.</text>
</comment>
<comment type="pathway">
    <text evidence="3">Secondary metabolite biosynthesis; terpenoid biosynthesis.</text>
</comment>
<comment type="similarity">
    <text evidence="5">Belongs to the FPP/GGPP synthase family.</text>
</comment>
<name>PLE4_RHOPP</name>
<sequence>MRIPNIFLSYLRQVAVDGTLSSCSGVKSRKPVIAFGFDDSQDSLVDENDEKILEPFGYYRHLLKGKSARTVLMHCFNAFLGLPEDWVLGVTKAIEDLHNASLLIDDIEDESALRRGSPAAHMKYGIALTMNAGNLVYFTVLQDIYDLGMRTGGTQVANAMAHIYTEEMIELHRGQGIEIWWRDQRSPPSVDQYIHMLEQKTGGLLRLGVRLLQCHPGGNNRADLSAIALRIGVYYQLRDDYINLMSTSYHDERGFAEDITEGKYTFPMLHSLKRSPDSGLREILDLKPADIALKKKAIAIMQETGSLIATRNLLGAVKNDLSGLVAEQRGDDYAMSAGLERFLEKLYIAE</sequence>
<feature type="chain" id="PRO_0000453729" description="Geranylgeranyl pyrophosphate synthase">
    <location>
        <begin position="1"/>
        <end position="350"/>
    </location>
</feature>
<feature type="binding site" evidence="2">
    <location>
        <position position="66"/>
    </location>
    <ligand>
        <name>isopentenyl diphosphate</name>
        <dbReference type="ChEBI" id="CHEBI:128769"/>
    </ligand>
</feature>
<feature type="binding site" evidence="2">
    <location>
        <position position="69"/>
    </location>
    <ligand>
        <name>isopentenyl diphosphate</name>
        <dbReference type="ChEBI" id="CHEBI:128769"/>
    </ligand>
</feature>
<feature type="binding site" evidence="2">
    <location>
        <position position="98"/>
    </location>
    <ligand>
        <name>isopentenyl diphosphate</name>
        <dbReference type="ChEBI" id="CHEBI:128769"/>
    </ligand>
</feature>
<feature type="binding site" evidence="2">
    <location>
        <position position="105"/>
    </location>
    <ligand>
        <name>Mg(2+)</name>
        <dbReference type="ChEBI" id="CHEBI:18420"/>
        <label>1</label>
    </ligand>
</feature>
<feature type="binding site" evidence="2">
    <location>
        <position position="105"/>
    </location>
    <ligand>
        <name>Mg(2+)</name>
        <dbReference type="ChEBI" id="CHEBI:18420"/>
        <label>2</label>
    </ligand>
</feature>
<feature type="binding site" evidence="2">
    <location>
        <position position="109"/>
    </location>
    <ligand>
        <name>Mg(2+)</name>
        <dbReference type="ChEBI" id="CHEBI:18420"/>
        <label>1</label>
    </ligand>
</feature>
<feature type="binding site" evidence="2">
    <location>
        <position position="109"/>
    </location>
    <ligand>
        <name>Mg(2+)</name>
        <dbReference type="ChEBI" id="CHEBI:18420"/>
        <label>2</label>
    </ligand>
</feature>
<feature type="binding site" evidence="2">
    <location>
        <position position="114"/>
    </location>
    <ligand>
        <name>dimethylallyl diphosphate</name>
        <dbReference type="ChEBI" id="CHEBI:57623"/>
    </ligand>
</feature>
<feature type="binding site" evidence="2">
    <location>
        <position position="115"/>
    </location>
    <ligand>
        <name>isopentenyl diphosphate</name>
        <dbReference type="ChEBI" id="CHEBI:128769"/>
    </ligand>
</feature>
<feature type="binding site" evidence="2">
    <location>
        <position position="200"/>
    </location>
    <ligand>
        <name>dimethylallyl diphosphate</name>
        <dbReference type="ChEBI" id="CHEBI:57623"/>
    </ligand>
</feature>
<feature type="binding site" evidence="2">
    <location>
        <position position="201"/>
    </location>
    <ligand>
        <name>dimethylallyl diphosphate</name>
        <dbReference type="ChEBI" id="CHEBI:57623"/>
    </ligand>
</feature>
<feature type="binding site" evidence="2">
    <location>
        <position position="236"/>
    </location>
    <ligand>
        <name>dimethylallyl diphosphate</name>
        <dbReference type="ChEBI" id="CHEBI:57623"/>
    </ligand>
</feature>
<feature type="binding site" evidence="2">
    <location>
        <position position="243"/>
    </location>
    <ligand>
        <name>dimethylallyl diphosphate</name>
        <dbReference type="ChEBI" id="CHEBI:57623"/>
    </ligand>
</feature>
<feature type="binding site" evidence="2">
    <location>
        <position position="263"/>
    </location>
    <ligand>
        <name>dimethylallyl diphosphate</name>
        <dbReference type="ChEBI" id="CHEBI:57623"/>
    </ligand>
</feature>
<feature type="site" description="Important for determining product chain length" evidence="2">
    <location>
        <position position="137"/>
    </location>
</feature>
<gene>
    <name evidence="4" type="primary">ple4</name>
</gene>
<organism>
    <name type="scientific">Rhodocybe pseudopiperita</name>
    <name type="common">Clitopilus pseudopiperitus</name>
    <dbReference type="NCBI Taxonomy" id="693819"/>
    <lineage>
        <taxon>Eukaryota</taxon>
        <taxon>Fungi</taxon>
        <taxon>Dikarya</taxon>
        <taxon>Basidiomycota</taxon>
        <taxon>Agaricomycotina</taxon>
        <taxon>Agaricomycetes</taxon>
        <taxon>Agaricomycetidae</taxon>
        <taxon>Agaricales</taxon>
        <taxon>Tricholomatineae</taxon>
        <taxon>Entolomataceae</taxon>
        <taxon>Rhodocybe</taxon>
    </lineage>
</organism>
<protein>
    <recommendedName>
        <fullName evidence="4">Geranylgeranyl pyrophosphate synthase</fullName>
        <shortName evidence="2">GGPP synthase</shortName>
        <shortName evidence="2">GGPPSase</shortName>
        <shortName evidence="2">GGS</shortName>
        <ecNumber evidence="2">2.5.1.-</ecNumber>
    </recommendedName>
    <alternativeName>
        <fullName evidence="2">(2E,6E)-farnesyl diphosphate synthase</fullName>
    </alternativeName>
    <alternativeName>
        <fullName evidence="2">Dimethylallyltranstransferase</fullName>
        <ecNumber evidence="2">2.5.1.1</ecNumber>
    </alternativeName>
    <alternativeName>
        <fullName evidence="2">Farnesyl diphosphate synthase</fullName>
    </alternativeName>
    <alternativeName>
        <fullName evidence="2">Farnesyltranstransferase</fullName>
        <ecNumber evidence="2">2.5.1.29</ecNumber>
    </alternativeName>
    <alternativeName>
        <fullName evidence="2">Geranylgeranyl diphosphate synthase</fullName>
    </alternativeName>
    <alternativeName>
        <fullName evidence="2">Geranyltranstransferase</fullName>
        <ecNumber evidence="2">2.5.1.10</ecNumber>
    </alternativeName>
    <alternativeName>
        <fullName evidence="4">Pleuromutilin biosynthetic cluster protein synthesis protein 4</fullName>
    </alternativeName>
</protein>
<reference key="1">
    <citation type="journal article" date="2017" name="ChemBioChem">
        <title>Biosynthetic machinery of diterpene pleuromutilin isolated from basidiomycete fungi.</title>
        <authorList>
            <person name="Yamane M."/>
            <person name="Minami A."/>
            <person name="Liu C."/>
            <person name="Ozaki T."/>
            <person name="Takeuchi I."/>
            <person name="Tsukagoshi T."/>
            <person name="Tokiwano T."/>
            <person name="Gomi K."/>
            <person name="Oikawa H."/>
        </authorList>
    </citation>
    <scope>NUCLEOTIDE SEQUENCE [GENOMIC DNA]</scope>
    <scope>FUNCTION</scope>
    <scope>CATALYTIC ACTIVITY</scope>
    <scope>PATHWAY</scope>
    <source>
        <strain>ATCC 20527</strain>
    </source>
</reference>